<gene>
    <name evidence="1" type="primary">cofH</name>
    <name type="ordered locus">alr4129</name>
</gene>
<name>COFH_NOSS1</name>
<evidence type="ECO:0000255" key="1">
    <source>
        <dbReference type="HAMAP-Rule" id="MF_01612"/>
    </source>
</evidence>
<evidence type="ECO:0000255" key="2">
    <source>
        <dbReference type="PROSITE-ProRule" id="PRU01266"/>
    </source>
</evidence>
<sequence length="391" mass="42981">MNYKTVDVILERALLGDDISPQEGVVLLTQTDSGAIASIRATADKLRQQQAGDTVTYVINRNINFTNICEQHCSFCAFRRDDGDADAYWLDWAGIREKSHDAVQRGATEICMQGGLHPQAQIDGKSLPYYLKLVETIKQEYPQIHLHAFSPQEVQFIARVDGLEYVDVISALQNAGVNSLPGTAAEVLDDEVRRILCPEKINTATWLEIIGTAHKVGLHTTSTILSGHIETPEQKIGHLEKLRSLQQTAINHKYPARITEFIVLPFVGQEAPKSLRRRVGRDQPILADALLLGAVARIYLGNWIPNHQPSWVKLGLAGATEALTWGCNDIGGTLMEEHITTMAGAVGGTCMEVATLQNAIASIGRPYQQRDTLYHKVDAAKKLANTVMSNG</sequence>
<feature type="chain" id="PRO_0000141708" description="5-amino-6-(D-ribitylamino)uracil--L-tyrosine 4-hydroxyphenyl transferase">
    <location>
        <begin position="1"/>
        <end position="391"/>
    </location>
</feature>
<feature type="domain" description="Radical SAM core" evidence="2">
    <location>
        <begin position="55"/>
        <end position="302"/>
    </location>
</feature>
<feature type="binding site" evidence="1">
    <location>
        <position position="69"/>
    </location>
    <ligand>
        <name>[4Fe-4S] cluster</name>
        <dbReference type="ChEBI" id="CHEBI:49883"/>
        <note>4Fe-4S-S-AdoMet</note>
    </ligand>
</feature>
<feature type="binding site" evidence="1">
    <location>
        <position position="73"/>
    </location>
    <ligand>
        <name>[4Fe-4S] cluster</name>
        <dbReference type="ChEBI" id="CHEBI:49883"/>
        <note>4Fe-4S-S-AdoMet</note>
    </ligand>
</feature>
<feature type="binding site" evidence="1">
    <location>
        <position position="76"/>
    </location>
    <ligand>
        <name>[4Fe-4S] cluster</name>
        <dbReference type="ChEBI" id="CHEBI:49883"/>
        <note>4Fe-4S-S-AdoMet</note>
    </ligand>
</feature>
<reference key="1">
    <citation type="journal article" date="2001" name="DNA Res.">
        <title>Complete genomic sequence of the filamentous nitrogen-fixing cyanobacterium Anabaena sp. strain PCC 7120.</title>
        <authorList>
            <person name="Kaneko T."/>
            <person name="Nakamura Y."/>
            <person name="Wolk C.P."/>
            <person name="Kuritz T."/>
            <person name="Sasamoto S."/>
            <person name="Watanabe A."/>
            <person name="Iriguchi M."/>
            <person name="Ishikawa A."/>
            <person name="Kawashima K."/>
            <person name="Kimura T."/>
            <person name="Kishida Y."/>
            <person name="Kohara M."/>
            <person name="Matsumoto M."/>
            <person name="Matsuno A."/>
            <person name="Muraki A."/>
            <person name="Nakazaki N."/>
            <person name="Shimpo S."/>
            <person name="Sugimoto M."/>
            <person name="Takazawa M."/>
            <person name="Yamada M."/>
            <person name="Yasuda M."/>
            <person name="Tabata S."/>
        </authorList>
    </citation>
    <scope>NUCLEOTIDE SEQUENCE [LARGE SCALE GENOMIC DNA]</scope>
    <source>
        <strain>PCC 7120 / SAG 25.82 / UTEX 2576</strain>
    </source>
</reference>
<proteinExistence type="inferred from homology"/>
<organism>
    <name type="scientific">Nostoc sp. (strain PCC 7120 / SAG 25.82 / UTEX 2576)</name>
    <dbReference type="NCBI Taxonomy" id="103690"/>
    <lineage>
        <taxon>Bacteria</taxon>
        <taxon>Bacillati</taxon>
        <taxon>Cyanobacteriota</taxon>
        <taxon>Cyanophyceae</taxon>
        <taxon>Nostocales</taxon>
        <taxon>Nostocaceae</taxon>
        <taxon>Nostoc</taxon>
    </lineage>
</organism>
<protein>
    <recommendedName>
        <fullName evidence="1">5-amino-6-(D-ribitylamino)uracil--L-tyrosine 4-hydroxyphenyl transferase</fullName>
        <ecNumber evidence="1">2.5.1.147</ecNumber>
    </recommendedName>
    <alternativeName>
        <fullName evidence="1">FO synthase subunit 2</fullName>
    </alternativeName>
</protein>
<accession>Q8YPR3</accession>
<keyword id="KW-0004">4Fe-4S</keyword>
<keyword id="KW-0408">Iron</keyword>
<keyword id="KW-0411">Iron-sulfur</keyword>
<keyword id="KW-0479">Metal-binding</keyword>
<keyword id="KW-1185">Reference proteome</keyword>
<keyword id="KW-0949">S-adenosyl-L-methionine</keyword>
<keyword id="KW-0808">Transferase</keyword>
<dbReference type="EC" id="2.5.1.147" evidence="1"/>
<dbReference type="EMBL" id="BA000019">
    <property type="protein sequence ID" value="BAB75828.1"/>
    <property type="molecule type" value="Genomic_DNA"/>
</dbReference>
<dbReference type="PIR" id="AB2322">
    <property type="entry name" value="AB2322"/>
</dbReference>
<dbReference type="RefSeq" id="WP_010998268.1">
    <property type="nucleotide sequence ID" value="NZ_RSCN01000010.1"/>
</dbReference>
<dbReference type="SMR" id="Q8YPR3"/>
<dbReference type="STRING" id="103690.gene:10496177"/>
<dbReference type="KEGG" id="ana:alr4129"/>
<dbReference type="eggNOG" id="COG1060">
    <property type="taxonomic scope" value="Bacteria"/>
</dbReference>
<dbReference type="OrthoDB" id="9802027at2"/>
<dbReference type="UniPathway" id="UPA00072"/>
<dbReference type="Proteomes" id="UP000002483">
    <property type="component" value="Chromosome"/>
</dbReference>
<dbReference type="GO" id="GO:0051539">
    <property type="term" value="F:4 iron, 4 sulfur cluster binding"/>
    <property type="evidence" value="ECO:0007669"/>
    <property type="project" value="UniProtKB-KW"/>
</dbReference>
<dbReference type="GO" id="GO:0141093">
    <property type="term" value="F:5-amino-6-(D-ribitylamino)uracil--L-tyrosine 4-hydroxyphenyl transferase activity"/>
    <property type="evidence" value="ECO:0007669"/>
    <property type="project" value="UniProtKB-EC"/>
</dbReference>
<dbReference type="GO" id="GO:0044689">
    <property type="term" value="F:7,8-didemethyl-8-hydroxy-5-deazariboflavin synthase activity"/>
    <property type="evidence" value="ECO:0007669"/>
    <property type="project" value="TreeGrafter"/>
</dbReference>
<dbReference type="GO" id="GO:0005506">
    <property type="term" value="F:iron ion binding"/>
    <property type="evidence" value="ECO:0007669"/>
    <property type="project" value="UniProtKB-UniRule"/>
</dbReference>
<dbReference type="Gene3D" id="3.20.20.70">
    <property type="entry name" value="Aldolase class I"/>
    <property type="match status" value="1"/>
</dbReference>
<dbReference type="HAMAP" id="MF_01612">
    <property type="entry name" value="FO_synth_sub2"/>
    <property type="match status" value="1"/>
</dbReference>
<dbReference type="InterPro" id="IPR013785">
    <property type="entry name" value="Aldolase_TIM"/>
</dbReference>
<dbReference type="InterPro" id="IPR045567">
    <property type="entry name" value="CofH/MnqC-like_C"/>
</dbReference>
<dbReference type="InterPro" id="IPR019940">
    <property type="entry name" value="CofH_family"/>
</dbReference>
<dbReference type="InterPro" id="IPR034405">
    <property type="entry name" value="F420"/>
</dbReference>
<dbReference type="InterPro" id="IPR020050">
    <property type="entry name" value="FO_synthase_su2"/>
</dbReference>
<dbReference type="InterPro" id="IPR007197">
    <property type="entry name" value="rSAM"/>
</dbReference>
<dbReference type="NCBIfam" id="TIGR00423">
    <property type="entry name" value="CofH family radical SAM protein"/>
    <property type="match status" value="1"/>
</dbReference>
<dbReference type="NCBIfam" id="TIGR03551">
    <property type="entry name" value="F420_cofH"/>
    <property type="match status" value="1"/>
</dbReference>
<dbReference type="NCBIfam" id="NF005609">
    <property type="entry name" value="PRK07360.1"/>
    <property type="match status" value="1"/>
</dbReference>
<dbReference type="PANTHER" id="PTHR43076">
    <property type="entry name" value="FO SYNTHASE (COFH)"/>
    <property type="match status" value="1"/>
</dbReference>
<dbReference type="PANTHER" id="PTHR43076:SF1">
    <property type="entry name" value="LIPOYL SYNTHASE 2"/>
    <property type="match status" value="1"/>
</dbReference>
<dbReference type="Pfam" id="PF19288">
    <property type="entry name" value="CofH_C"/>
    <property type="match status" value="1"/>
</dbReference>
<dbReference type="Pfam" id="PF04055">
    <property type="entry name" value="Radical_SAM"/>
    <property type="match status" value="1"/>
</dbReference>
<dbReference type="PIRSF" id="PIRSF004762">
    <property type="entry name" value="CHP00423"/>
    <property type="match status" value="1"/>
</dbReference>
<dbReference type="SFLD" id="SFLDF00293">
    <property type="entry name" value="((2_3_4_5-tetrahydroxypentyl)a"/>
    <property type="match status" value="1"/>
</dbReference>
<dbReference type="SFLD" id="SFLDG01389">
    <property type="entry name" value="menaquinone_synthsis_involved"/>
    <property type="match status" value="1"/>
</dbReference>
<dbReference type="SFLD" id="SFLDS00029">
    <property type="entry name" value="Radical_SAM"/>
    <property type="match status" value="1"/>
</dbReference>
<dbReference type="SUPFAM" id="SSF102114">
    <property type="entry name" value="Radical SAM enzymes"/>
    <property type="match status" value="1"/>
</dbReference>
<dbReference type="PROSITE" id="PS51918">
    <property type="entry name" value="RADICAL_SAM"/>
    <property type="match status" value="1"/>
</dbReference>
<comment type="function">
    <text evidence="1">Catalyzes the radical-mediated synthesis of 5-amino-5-(4-hydroxybenzyl)-6-(D-ribitylimino)-5,6-dihydrouracil from 5-amino-6-(D-ribitylamino)uracil and L-tyrosine.</text>
</comment>
<comment type="catalytic activity">
    <reaction evidence="1">
        <text>5-amino-6-(D-ribitylamino)uracil + L-tyrosine + S-adenosyl-L-methionine = 5-amino-5-(4-hydroxybenzyl)-6-(D-ribitylimino)-5,6-dihydrouracil + 2-iminoacetate + 5'-deoxyadenosine + L-methionine + H(+)</text>
        <dbReference type="Rhea" id="RHEA:55200"/>
        <dbReference type="ChEBI" id="CHEBI:15378"/>
        <dbReference type="ChEBI" id="CHEBI:15934"/>
        <dbReference type="ChEBI" id="CHEBI:17319"/>
        <dbReference type="ChEBI" id="CHEBI:57844"/>
        <dbReference type="ChEBI" id="CHEBI:58315"/>
        <dbReference type="ChEBI" id="CHEBI:59789"/>
        <dbReference type="ChEBI" id="CHEBI:77846"/>
        <dbReference type="ChEBI" id="CHEBI:85936"/>
        <dbReference type="EC" id="2.5.1.147"/>
    </reaction>
</comment>
<comment type="cofactor">
    <cofactor evidence="1">
        <name>[4Fe-4S] cluster</name>
        <dbReference type="ChEBI" id="CHEBI:49883"/>
    </cofactor>
    <text evidence="1">Binds 1 [4Fe-4S] cluster. The cluster is coordinated with 3 cysteines and an exchangeable S-adenosyl-L-methionine.</text>
</comment>
<comment type="pathway">
    <text evidence="1">Cofactor biosynthesis; coenzyme F0 biosynthesis.</text>
</comment>
<comment type="subunit">
    <text evidence="1">Consists of two subunits, CofG and CofH.</text>
</comment>
<comment type="similarity">
    <text evidence="1">Belongs to the radical SAM superfamily. CofH family.</text>
</comment>